<gene>
    <name evidence="1" type="primary">mukF</name>
    <name type="ordered locus">ECIAI39_2225</name>
</gene>
<accession>B7NM52</accession>
<sequence length="440" mass="50579">MSEFSQTVPELVAWARKNDFSISLPVDRLSFLLAVATLNGERLDGEMSEGELVDAFRHVSDAFEQTSETIGVRANNAINDMVRQRLLNRFTSEQAEGNAIYRLTPLGIGITDYYIRQREFSTLRLSMQLSIVAGELKRAADAAEEGGDEFHWHRNVYAPLKYSVAEIFDSIDLTQRLMDEQQQQVKDDIAQLLNKDWRAAISSCELLLSETSGTLRELQDTLEAAGDKLQANLLRIQDATMTHDDLHFVDRLVFDLQSKLDRIISWGQQSIDLWIGYDRHVHKFIRTAIDMDKNRVFAQRLRQSVQTYFDEPWALTYANADRLLDMRDEEMALRDEEVTGELPEDLEYEEFNEIREQLAAIIEEQLAVYKTRQVPLDLGLVVREYLSQYPRARHFDVARIVIDQAVRLGVAQADFTGLPAKWQPINDYGAKVQAHVIDKY</sequence>
<feature type="chain" id="PRO_1000187502" description="Chromosome partition protein MukF">
    <location>
        <begin position="1"/>
        <end position="440"/>
    </location>
</feature>
<feature type="region of interest" description="Leucine-zipper">
    <location>
        <begin position="208"/>
        <end position="236"/>
    </location>
</feature>
<name>MUKF_ECO7I</name>
<comment type="function">
    <text evidence="1">Involved in chromosome condensation, segregation and cell cycle progression. May participate in facilitating chromosome segregation by condensation DNA from both sides of a centrally located replisome during cell division. Not required for mini-F plasmid partitioning. Probably acts via its interaction with MukB and MukE. Overexpression results in anucleate cells. It has a calcium binding activity.</text>
</comment>
<comment type="subunit">
    <text evidence="1">Interacts, and probably forms a ternary complex, with MukE and MukB via its C-terminal region. The complex formation is stimulated by calcium or magnesium. It is required for an interaction between MukE and MukB.</text>
</comment>
<comment type="subcellular location">
    <subcellularLocation>
        <location evidence="1">Cytoplasm</location>
        <location evidence="1">Nucleoid</location>
    </subcellularLocation>
    <text evidence="1">Restricted to the nucleoid region.</text>
</comment>
<comment type="similarity">
    <text evidence="1">Belongs to the MukF family.</text>
</comment>
<proteinExistence type="inferred from homology"/>
<reference key="1">
    <citation type="journal article" date="2009" name="PLoS Genet.">
        <title>Organised genome dynamics in the Escherichia coli species results in highly diverse adaptive paths.</title>
        <authorList>
            <person name="Touchon M."/>
            <person name="Hoede C."/>
            <person name="Tenaillon O."/>
            <person name="Barbe V."/>
            <person name="Baeriswyl S."/>
            <person name="Bidet P."/>
            <person name="Bingen E."/>
            <person name="Bonacorsi S."/>
            <person name="Bouchier C."/>
            <person name="Bouvet O."/>
            <person name="Calteau A."/>
            <person name="Chiapello H."/>
            <person name="Clermont O."/>
            <person name="Cruveiller S."/>
            <person name="Danchin A."/>
            <person name="Diard M."/>
            <person name="Dossat C."/>
            <person name="Karoui M.E."/>
            <person name="Frapy E."/>
            <person name="Garry L."/>
            <person name="Ghigo J.M."/>
            <person name="Gilles A.M."/>
            <person name="Johnson J."/>
            <person name="Le Bouguenec C."/>
            <person name="Lescat M."/>
            <person name="Mangenot S."/>
            <person name="Martinez-Jehanne V."/>
            <person name="Matic I."/>
            <person name="Nassif X."/>
            <person name="Oztas S."/>
            <person name="Petit M.A."/>
            <person name="Pichon C."/>
            <person name="Rouy Z."/>
            <person name="Ruf C.S."/>
            <person name="Schneider D."/>
            <person name="Tourret J."/>
            <person name="Vacherie B."/>
            <person name="Vallenet D."/>
            <person name="Medigue C."/>
            <person name="Rocha E.P.C."/>
            <person name="Denamur E."/>
        </authorList>
    </citation>
    <scope>NUCLEOTIDE SEQUENCE [LARGE SCALE GENOMIC DNA]</scope>
    <source>
        <strain>IAI39 / ExPEC</strain>
    </source>
</reference>
<evidence type="ECO:0000255" key="1">
    <source>
        <dbReference type="HAMAP-Rule" id="MF_01803"/>
    </source>
</evidence>
<dbReference type="EMBL" id="CU928164">
    <property type="protein sequence ID" value="CAR18352.1"/>
    <property type="molecule type" value="Genomic_DNA"/>
</dbReference>
<dbReference type="RefSeq" id="WP_001288850.1">
    <property type="nucleotide sequence ID" value="NC_011750.1"/>
</dbReference>
<dbReference type="RefSeq" id="YP_002408188.1">
    <property type="nucleotide sequence ID" value="NC_011750.1"/>
</dbReference>
<dbReference type="SMR" id="B7NM52"/>
<dbReference type="STRING" id="585057.ECIAI39_2225"/>
<dbReference type="GeneID" id="93776493"/>
<dbReference type="KEGG" id="ect:ECIAI39_2225"/>
<dbReference type="PATRIC" id="fig|585057.6.peg.2318"/>
<dbReference type="HOGENOM" id="CLU_049853_0_0_6"/>
<dbReference type="Proteomes" id="UP000000749">
    <property type="component" value="Chromosome"/>
</dbReference>
<dbReference type="GO" id="GO:0005737">
    <property type="term" value="C:cytoplasm"/>
    <property type="evidence" value="ECO:0007669"/>
    <property type="project" value="UniProtKB-UniRule"/>
</dbReference>
<dbReference type="GO" id="GO:0009295">
    <property type="term" value="C:nucleoid"/>
    <property type="evidence" value="ECO:0007669"/>
    <property type="project" value="UniProtKB-SubCell"/>
</dbReference>
<dbReference type="GO" id="GO:0005509">
    <property type="term" value="F:calcium ion binding"/>
    <property type="evidence" value="ECO:0007669"/>
    <property type="project" value="UniProtKB-UniRule"/>
</dbReference>
<dbReference type="GO" id="GO:0051301">
    <property type="term" value="P:cell division"/>
    <property type="evidence" value="ECO:0007669"/>
    <property type="project" value="UniProtKB-KW"/>
</dbReference>
<dbReference type="GO" id="GO:0030261">
    <property type="term" value="P:chromosome condensation"/>
    <property type="evidence" value="ECO:0007669"/>
    <property type="project" value="UniProtKB-KW"/>
</dbReference>
<dbReference type="GO" id="GO:0007059">
    <property type="term" value="P:chromosome segregation"/>
    <property type="evidence" value="ECO:0007669"/>
    <property type="project" value="UniProtKB-UniRule"/>
</dbReference>
<dbReference type="GO" id="GO:0006260">
    <property type="term" value="P:DNA replication"/>
    <property type="evidence" value="ECO:0007669"/>
    <property type="project" value="UniProtKB-UniRule"/>
</dbReference>
<dbReference type="CDD" id="cd16337">
    <property type="entry name" value="MukF_C"/>
    <property type="match status" value="1"/>
</dbReference>
<dbReference type="CDD" id="cd16335">
    <property type="entry name" value="MukF_N"/>
    <property type="match status" value="1"/>
</dbReference>
<dbReference type="Gene3D" id="1.20.58.590">
    <property type="entry name" value="Chromosome partition protein MukF, middle domain"/>
    <property type="match status" value="1"/>
</dbReference>
<dbReference type="Gene3D" id="1.10.225.40">
    <property type="entry name" value="MukF, C-terminal domain"/>
    <property type="match status" value="1"/>
</dbReference>
<dbReference type="Gene3D" id="1.10.10.10">
    <property type="entry name" value="Winged helix-like DNA-binding domain superfamily/Winged helix DNA-binding domain"/>
    <property type="match status" value="1"/>
</dbReference>
<dbReference type="HAMAP" id="MF_01803">
    <property type="entry name" value="MukF"/>
    <property type="match status" value="1"/>
</dbReference>
<dbReference type="InterPro" id="IPR005582">
    <property type="entry name" value="Chromosome_partition_MukF"/>
</dbReference>
<dbReference type="InterPro" id="IPR033441">
    <property type="entry name" value="MukF_C"/>
</dbReference>
<dbReference type="InterPro" id="IPR038198">
    <property type="entry name" value="MukF_C_sf"/>
</dbReference>
<dbReference type="InterPro" id="IPR033440">
    <property type="entry name" value="MukF_M"/>
</dbReference>
<dbReference type="InterPro" id="IPR036141">
    <property type="entry name" value="MukF_M_sp"/>
</dbReference>
<dbReference type="InterPro" id="IPR033439">
    <property type="entry name" value="MukF_WHTH"/>
</dbReference>
<dbReference type="InterPro" id="IPR036388">
    <property type="entry name" value="WH-like_DNA-bd_sf"/>
</dbReference>
<dbReference type="InterPro" id="IPR036390">
    <property type="entry name" value="WH_DNA-bd_sf"/>
</dbReference>
<dbReference type="NCBIfam" id="NF003615">
    <property type="entry name" value="PRK05260.1"/>
    <property type="match status" value="1"/>
</dbReference>
<dbReference type="Pfam" id="PF03882">
    <property type="entry name" value="KicB"/>
    <property type="match status" value="1"/>
</dbReference>
<dbReference type="Pfam" id="PF17193">
    <property type="entry name" value="MukF_C"/>
    <property type="match status" value="1"/>
</dbReference>
<dbReference type="Pfam" id="PF17192">
    <property type="entry name" value="MukF_M"/>
    <property type="match status" value="1"/>
</dbReference>
<dbReference type="PIRSF" id="PIRSF018282">
    <property type="entry name" value="MukF"/>
    <property type="match status" value="1"/>
</dbReference>
<dbReference type="SUPFAM" id="SSF140570">
    <property type="entry name" value="MukF C-terminal domain-like"/>
    <property type="match status" value="1"/>
</dbReference>
<dbReference type="SUPFAM" id="SSF46785">
    <property type="entry name" value="Winged helix' DNA-binding domain"/>
    <property type="match status" value="1"/>
</dbReference>
<protein>
    <recommendedName>
        <fullName evidence="1">Chromosome partition protein MukF</fullName>
    </recommendedName>
</protein>
<organism>
    <name type="scientific">Escherichia coli O7:K1 (strain IAI39 / ExPEC)</name>
    <dbReference type="NCBI Taxonomy" id="585057"/>
    <lineage>
        <taxon>Bacteria</taxon>
        <taxon>Pseudomonadati</taxon>
        <taxon>Pseudomonadota</taxon>
        <taxon>Gammaproteobacteria</taxon>
        <taxon>Enterobacterales</taxon>
        <taxon>Enterobacteriaceae</taxon>
        <taxon>Escherichia</taxon>
    </lineage>
</organism>
<keyword id="KW-0106">Calcium</keyword>
<keyword id="KW-0131">Cell cycle</keyword>
<keyword id="KW-0132">Cell division</keyword>
<keyword id="KW-0159">Chromosome partition</keyword>
<keyword id="KW-0963">Cytoplasm</keyword>
<keyword id="KW-0226">DNA condensation</keyword>